<comment type="function">
    <text evidence="1">Nucleotidyltransferase involved in the post-translational modification of proteins. It can catalyze the addition of adenosine monophosphate (AMP) or uridine monophosphate (UMP) to a protein, resulting in modifications known as AMPylation and UMPylation.</text>
</comment>
<comment type="catalytic activity">
    <reaction evidence="1">
        <text>L-seryl-[protein] + ATP = 3-O-(5'-adenylyl)-L-seryl-[protein] + diphosphate</text>
        <dbReference type="Rhea" id="RHEA:58120"/>
        <dbReference type="Rhea" id="RHEA-COMP:9863"/>
        <dbReference type="Rhea" id="RHEA-COMP:15073"/>
        <dbReference type="ChEBI" id="CHEBI:29999"/>
        <dbReference type="ChEBI" id="CHEBI:30616"/>
        <dbReference type="ChEBI" id="CHEBI:33019"/>
        <dbReference type="ChEBI" id="CHEBI:142516"/>
        <dbReference type="EC" id="2.7.7.108"/>
    </reaction>
</comment>
<comment type="catalytic activity">
    <reaction evidence="1">
        <text>L-threonyl-[protein] + ATP = 3-O-(5'-adenylyl)-L-threonyl-[protein] + diphosphate</text>
        <dbReference type="Rhea" id="RHEA:54292"/>
        <dbReference type="Rhea" id="RHEA-COMP:11060"/>
        <dbReference type="Rhea" id="RHEA-COMP:13847"/>
        <dbReference type="ChEBI" id="CHEBI:30013"/>
        <dbReference type="ChEBI" id="CHEBI:30616"/>
        <dbReference type="ChEBI" id="CHEBI:33019"/>
        <dbReference type="ChEBI" id="CHEBI:138113"/>
        <dbReference type="EC" id="2.7.7.108"/>
    </reaction>
</comment>
<comment type="catalytic activity">
    <reaction evidence="1">
        <text>L-tyrosyl-[protein] + ATP = O-(5'-adenylyl)-L-tyrosyl-[protein] + diphosphate</text>
        <dbReference type="Rhea" id="RHEA:54288"/>
        <dbReference type="Rhea" id="RHEA-COMP:10136"/>
        <dbReference type="Rhea" id="RHEA-COMP:13846"/>
        <dbReference type="ChEBI" id="CHEBI:30616"/>
        <dbReference type="ChEBI" id="CHEBI:33019"/>
        <dbReference type="ChEBI" id="CHEBI:46858"/>
        <dbReference type="ChEBI" id="CHEBI:83624"/>
        <dbReference type="EC" id="2.7.7.108"/>
    </reaction>
</comment>
<comment type="catalytic activity">
    <reaction evidence="1">
        <text>L-histidyl-[protein] + UTP = N(tele)-(5'-uridylyl)-L-histidyl-[protein] + diphosphate</text>
        <dbReference type="Rhea" id="RHEA:83891"/>
        <dbReference type="Rhea" id="RHEA-COMP:9745"/>
        <dbReference type="Rhea" id="RHEA-COMP:20239"/>
        <dbReference type="ChEBI" id="CHEBI:29979"/>
        <dbReference type="ChEBI" id="CHEBI:33019"/>
        <dbReference type="ChEBI" id="CHEBI:46398"/>
        <dbReference type="ChEBI" id="CHEBI:233474"/>
    </reaction>
</comment>
<comment type="catalytic activity">
    <reaction evidence="1">
        <text>L-seryl-[protein] + UTP = O-(5'-uridylyl)-L-seryl-[protein] + diphosphate</text>
        <dbReference type="Rhea" id="RHEA:64604"/>
        <dbReference type="Rhea" id="RHEA-COMP:9863"/>
        <dbReference type="Rhea" id="RHEA-COMP:16635"/>
        <dbReference type="ChEBI" id="CHEBI:29999"/>
        <dbReference type="ChEBI" id="CHEBI:33019"/>
        <dbReference type="ChEBI" id="CHEBI:46398"/>
        <dbReference type="ChEBI" id="CHEBI:156051"/>
    </reaction>
</comment>
<comment type="catalytic activity">
    <reaction evidence="1">
        <text>L-tyrosyl-[protein] + UTP = O-(5'-uridylyl)-L-tyrosyl-[protein] + diphosphate</text>
        <dbReference type="Rhea" id="RHEA:83887"/>
        <dbReference type="Rhea" id="RHEA-COMP:10136"/>
        <dbReference type="Rhea" id="RHEA-COMP:20238"/>
        <dbReference type="ChEBI" id="CHEBI:33019"/>
        <dbReference type="ChEBI" id="CHEBI:46398"/>
        <dbReference type="ChEBI" id="CHEBI:46858"/>
        <dbReference type="ChEBI" id="CHEBI:90602"/>
    </reaction>
</comment>
<comment type="cofactor">
    <cofactor evidence="1">
        <name>Mg(2+)</name>
        <dbReference type="ChEBI" id="CHEBI:18420"/>
    </cofactor>
    <cofactor evidence="1">
        <name>Mn(2+)</name>
        <dbReference type="ChEBI" id="CHEBI:29035"/>
    </cofactor>
</comment>
<comment type="similarity">
    <text evidence="1">Belongs to the SELO family.</text>
</comment>
<name>SELO_MYCPA</name>
<dbReference type="EC" id="2.7.7.-" evidence="1"/>
<dbReference type="EC" id="2.7.7.108" evidence="1"/>
<dbReference type="EMBL" id="AE016958">
    <property type="protein sequence ID" value="AAS05702.1"/>
    <property type="molecule type" value="Genomic_DNA"/>
</dbReference>
<dbReference type="RefSeq" id="WP_003878812.1">
    <property type="nucleotide sequence ID" value="NZ_CP106873.1"/>
</dbReference>
<dbReference type="SMR" id="Q73V62"/>
<dbReference type="STRING" id="262316.MAP_3154"/>
<dbReference type="KEGG" id="mpa:MAP_3154"/>
<dbReference type="PATRIC" id="fig|262316.17.peg.3348"/>
<dbReference type="eggNOG" id="COG0397">
    <property type="taxonomic scope" value="Bacteria"/>
</dbReference>
<dbReference type="HOGENOM" id="CLU_010245_4_1_11"/>
<dbReference type="Proteomes" id="UP000000580">
    <property type="component" value="Chromosome"/>
</dbReference>
<dbReference type="GO" id="GO:0070733">
    <property type="term" value="F:AMPylase activity"/>
    <property type="evidence" value="ECO:0007669"/>
    <property type="project" value="RHEA"/>
</dbReference>
<dbReference type="GO" id="GO:0005524">
    <property type="term" value="F:ATP binding"/>
    <property type="evidence" value="ECO:0007669"/>
    <property type="project" value="UniProtKB-UniRule"/>
</dbReference>
<dbReference type="GO" id="GO:0000287">
    <property type="term" value="F:magnesium ion binding"/>
    <property type="evidence" value="ECO:0007669"/>
    <property type="project" value="UniProtKB-UniRule"/>
</dbReference>
<dbReference type="HAMAP" id="MF_00692">
    <property type="entry name" value="YdiU_SelO"/>
    <property type="match status" value="1"/>
</dbReference>
<dbReference type="InterPro" id="IPR003846">
    <property type="entry name" value="SelO"/>
</dbReference>
<dbReference type="NCBIfam" id="NF000658">
    <property type="entry name" value="PRK00029.1"/>
    <property type="match status" value="1"/>
</dbReference>
<dbReference type="PANTHER" id="PTHR32057">
    <property type="entry name" value="PROTEIN ADENYLYLTRANSFERASE SELO, MITOCHONDRIAL"/>
    <property type="match status" value="1"/>
</dbReference>
<dbReference type="PANTHER" id="PTHR32057:SF14">
    <property type="entry name" value="PROTEIN ADENYLYLTRANSFERASE SELO, MITOCHONDRIAL"/>
    <property type="match status" value="1"/>
</dbReference>
<dbReference type="Pfam" id="PF02696">
    <property type="entry name" value="SelO"/>
    <property type="match status" value="1"/>
</dbReference>
<organism>
    <name type="scientific">Mycolicibacterium paratuberculosis (strain ATCC BAA-968 / K-10)</name>
    <name type="common">Mycobacterium paratuberculosis</name>
    <dbReference type="NCBI Taxonomy" id="262316"/>
    <lineage>
        <taxon>Bacteria</taxon>
        <taxon>Bacillati</taxon>
        <taxon>Actinomycetota</taxon>
        <taxon>Actinomycetes</taxon>
        <taxon>Mycobacteriales</taxon>
        <taxon>Mycobacteriaceae</taxon>
        <taxon>Mycobacterium</taxon>
        <taxon>Mycobacterium avium complex (MAC)</taxon>
    </lineage>
</organism>
<protein>
    <recommendedName>
        <fullName evidence="1">Protein nucleotidyltransferase YdiU</fullName>
        <ecNumber evidence="1">2.7.7.-</ecNumber>
    </recommendedName>
    <alternativeName>
        <fullName evidence="1">Protein adenylyltransferase YdiU</fullName>
        <ecNumber evidence="1">2.7.7.108</ecNumber>
    </alternativeName>
    <alternativeName>
        <fullName evidence="1">Protein uridylyltransferase YdiU</fullName>
        <ecNumber evidence="1">2.7.7.-</ecNumber>
    </alternativeName>
</protein>
<keyword id="KW-0067">ATP-binding</keyword>
<keyword id="KW-0460">Magnesium</keyword>
<keyword id="KW-0464">Manganese</keyword>
<keyword id="KW-0479">Metal-binding</keyword>
<keyword id="KW-0547">Nucleotide-binding</keyword>
<keyword id="KW-0548">Nucleotidyltransferase</keyword>
<keyword id="KW-1185">Reference proteome</keyword>
<keyword id="KW-0808">Transferase</keyword>
<gene>
    <name evidence="1" type="primary">ydiU</name>
    <name evidence="1" type="synonym">selO</name>
    <name type="ordered locus">MAP_3154</name>
</gene>
<reference key="1">
    <citation type="journal article" date="2005" name="Proc. Natl. Acad. Sci. U.S.A.">
        <title>The complete genome sequence of Mycobacterium avium subspecies paratuberculosis.</title>
        <authorList>
            <person name="Li L."/>
            <person name="Bannantine J.P."/>
            <person name="Zhang Q."/>
            <person name="Amonsin A."/>
            <person name="May B.J."/>
            <person name="Alt D."/>
            <person name="Banerji N."/>
            <person name="Kanjilal S."/>
            <person name="Kapur V."/>
        </authorList>
    </citation>
    <scope>NUCLEOTIDE SEQUENCE [LARGE SCALE GENOMIC DNA]</scope>
    <source>
        <strain>ATCC BAA-968 / K-10</strain>
    </source>
</reference>
<proteinExistence type="inferred from homology"/>
<sequence length="491" mass="53324">MSVAPETTVALQDRFFRELPELAVRWQAETFPELRLLVLNEPLATQLGLDTGWLRGPDGLRFLTGNLVPTGAAPVAQAYSGHQFGGFVPRLGDGRALLLGELVDNKGRLRDIHLKGSGATPFARGGDGLAAVGPMLREYVVSEAMHALGVPTTRSLAVVGTGRPVYREATLPGAVLARVASSHLRVGSFQYAAATGNRDLLRRLADHAIARHHPGAADAEQPYLALFEAVVAAQASLIAQWMLIGFVHGVMNTDNMTISGETIDYGPCAFMEAYDPDTVFSSIDFWGRYAYGNQPVIAGWNLARFAETLLPLFSENTEEAIALAERSFGVFQTRYDAVWATGMRAKLGLPAQVDAEFAAALIDELLALLKANHVDYTSFFRQLGRAARGDDRSAAEPAREMFMDLPGFDAWLARWRALGPDADAMDRVNPIYIPRNHLVEEALAAATDGDLDPLDQLLAAVTAPYTERPGFERYASPAPEDFGKYQTFCGT</sequence>
<accession>Q73V62</accession>
<evidence type="ECO:0000255" key="1">
    <source>
        <dbReference type="HAMAP-Rule" id="MF_00692"/>
    </source>
</evidence>
<feature type="chain" id="PRO_0000271833" description="Protein nucleotidyltransferase YdiU">
    <location>
        <begin position="1"/>
        <end position="491"/>
    </location>
</feature>
<feature type="active site" description="Proton acceptor" evidence="1">
    <location>
        <position position="254"/>
    </location>
</feature>
<feature type="binding site" evidence="1">
    <location>
        <position position="92"/>
    </location>
    <ligand>
        <name>ATP</name>
        <dbReference type="ChEBI" id="CHEBI:30616"/>
    </ligand>
</feature>
<feature type="binding site" evidence="1">
    <location>
        <position position="94"/>
    </location>
    <ligand>
        <name>ATP</name>
        <dbReference type="ChEBI" id="CHEBI:30616"/>
    </ligand>
</feature>
<feature type="binding site" evidence="1">
    <location>
        <position position="95"/>
    </location>
    <ligand>
        <name>ATP</name>
        <dbReference type="ChEBI" id="CHEBI:30616"/>
    </ligand>
</feature>
<feature type="binding site" evidence="1">
    <location>
        <position position="115"/>
    </location>
    <ligand>
        <name>ATP</name>
        <dbReference type="ChEBI" id="CHEBI:30616"/>
    </ligand>
</feature>
<feature type="binding site" evidence="1">
    <location>
        <position position="127"/>
    </location>
    <ligand>
        <name>ATP</name>
        <dbReference type="ChEBI" id="CHEBI:30616"/>
    </ligand>
</feature>
<feature type="binding site" evidence="1">
    <location>
        <position position="128"/>
    </location>
    <ligand>
        <name>ATP</name>
        <dbReference type="ChEBI" id="CHEBI:30616"/>
    </ligand>
</feature>
<feature type="binding site" evidence="1">
    <location>
        <position position="178"/>
    </location>
    <ligand>
        <name>ATP</name>
        <dbReference type="ChEBI" id="CHEBI:30616"/>
    </ligand>
</feature>
<feature type="binding site" evidence="1">
    <location>
        <position position="185"/>
    </location>
    <ligand>
        <name>ATP</name>
        <dbReference type="ChEBI" id="CHEBI:30616"/>
    </ligand>
</feature>
<feature type="binding site" evidence="1">
    <location>
        <position position="255"/>
    </location>
    <ligand>
        <name>Mg(2+)</name>
        <dbReference type="ChEBI" id="CHEBI:18420"/>
    </ligand>
</feature>
<feature type="binding site" evidence="1">
    <location>
        <position position="264"/>
    </location>
    <ligand>
        <name>ATP</name>
        <dbReference type="ChEBI" id="CHEBI:30616"/>
    </ligand>
</feature>
<feature type="binding site" evidence="1">
    <location>
        <position position="264"/>
    </location>
    <ligand>
        <name>Mg(2+)</name>
        <dbReference type="ChEBI" id="CHEBI:18420"/>
    </ligand>
</feature>